<keyword id="KW-0488">Methylation</keyword>
<keyword id="KW-0489">Methyltransferase</keyword>
<keyword id="KW-1185">Reference proteome</keyword>
<keyword id="KW-0677">Repeat</keyword>
<keyword id="KW-0949">S-adenosyl-L-methionine</keyword>
<keyword id="KW-0808">Transferase</keyword>
<gene>
    <name evidence="3" type="primary">pgiMA1</name>
    <name type="ORF">PHLGIDRAFT_54959</name>
</gene>
<feature type="chain" id="PRO_0000458519" description="N-methyltranferase pgiM1" evidence="2">
    <location>
        <begin position="1"/>
        <end position="386"/>
    </location>
</feature>
<feature type="peptide" id="PRO_0000458520" description="Ribosomally synthesized type II borosin core peptide pgiA1-I" evidence="2">
    <location>
        <begin position="387"/>
        <end position="399"/>
    </location>
</feature>
<feature type="peptide" id="PRO_0000458521" description="Ribosomally synthesized type II borosin core peptide pgiA1-II" evidence="2">
    <location>
        <begin position="400"/>
        <end position="412"/>
    </location>
</feature>
<feature type="peptide" id="PRO_0000458522" description="Ribosomally synthesized type II borosin core peptide pgiA1-III" evidence="2">
    <location>
        <begin position="413"/>
        <end position="425"/>
    </location>
</feature>
<feature type="peptide" id="PRO_0000458523" description="Ribosomally synthesized type II borosin core peptide pgiA1-IV" evidence="2">
    <location>
        <begin position="426"/>
        <end position="438"/>
    </location>
</feature>
<feature type="peptide" id="PRO_0000458524" description="Ribosomally synthesized type II borosin core peptide pgiA1-V" evidence="2">
    <location>
        <begin position="439"/>
        <end position="451"/>
    </location>
</feature>
<feature type="peptide" id="PRO_0000458525" description="Ribosomally synthesized type II borosin core peptide pgiA1-VI" evidence="2">
    <location>
        <begin position="452"/>
        <end position="464"/>
    </location>
</feature>
<feature type="peptide" id="PRO_0000458526" description="Ribosomally synthesized type II borosin core peptide pgiA1-VII" evidence="2">
    <location>
        <begin position="465"/>
        <end position="477"/>
    </location>
</feature>
<feature type="peptide" id="PRO_0000458527" description="Ribosomally synthesized type II borosin core peptide pgiA1-VIII" evidence="2">
    <location>
        <begin position="478"/>
        <end position="490"/>
    </location>
</feature>
<feature type="peptide" id="PRO_0000458528" description="Ribosomally synthesized type II borosin core peptide pgiA1-IX" evidence="2">
    <location>
        <begin position="491"/>
        <end position="503"/>
    </location>
</feature>
<feature type="peptide" id="PRO_0000458529" description="Ribosomally synthesized type II borosin core peptide pgiA1-X" evidence="2">
    <location>
        <begin position="504"/>
        <end position="516"/>
    </location>
</feature>
<feature type="peptide" id="PRO_0000458530" description="Ribosomally synthesized type II borosin core peptide pgiA1-XI" evidence="2">
    <location>
        <begin position="517"/>
        <end position="529"/>
    </location>
</feature>
<feature type="peptide" id="PRO_0000458531" description="Ribosomally synthesized type II borosin core peptide pgiA1-XII" evidence="2">
    <location>
        <begin position="530"/>
        <end position="542"/>
    </location>
</feature>
<feature type="propeptide" id="PRO_0000458532" evidence="2">
    <location>
        <begin position="543"/>
        <end position="556"/>
    </location>
</feature>
<feature type="region of interest" description="Methyltransferase domain" evidence="1">
    <location>
        <begin position="1"/>
        <end position="250"/>
    </location>
</feature>
<feature type="region of interest" description="Clasp domain" evidence="1">
    <location>
        <begin position="251"/>
        <end position="377"/>
    </location>
</feature>
<feature type="region of interest" description="Precursor leader" evidence="1">
    <location>
        <begin position="378"/>
        <end position="386"/>
    </location>
</feature>
<feature type="active site" evidence="1">
    <location>
        <position position="74"/>
    </location>
</feature>
<feature type="active site" evidence="1">
    <location>
        <position position="78"/>
    </location>
</feature>
<feature type="active site" evidence="1">
    <location>
        <position position="100"/>
    </location>
</feature>
<feature type="binding site" evidence="1">
    <location>
        <position position="100"/>
    </location>
    <ligand>
        <name>S-adenosyl-L-methionine</name>
        <dbReference type="ChEBI" id="CHEBI:59789"/>
    </ligand>
</feature>
<feature type="binding site" evidence="1">
    <location>
        <position position="102"/>
    </location>
    <ligand>
        <name>S-adenosyl-L-methionine</name>
        <dbReference type="ChEBI" id="CHEBI:59789"/>
    </ligand>
</feature>
<feature type="binding site" evidence="1">
    <location>
        <position position="105"/>
    </location>
    <ligand>
        <name>S-adenosyl-L-methionine</name>
        <dbReference type="ChEBI" id="CHEBI:59789"/>
    </ligand>
</feature>
<feature type="binding site" evidence="1">
    <location>
        <position position="174"/>
    </location>
    <ligand>
        <name>S-adenosyl-L-methionine</name>
        <dbReference type="ChEBI" id="CHEBI:59789"/>
    </ligand>
</feature>
<feature type="binding site" evidence="1">
    <location>
        <position position="212"/>
    </location>
    <ligand>
        <name>S-adenosyl-L-methionine</name>
        <dbReference type="ChEBI" id="CHEBI:59789"/>
    </ligand>
</feature>
<feature type="binding site" evidence="1">
    <location>
        <position position="243"/>
    </location>
    <ligand>
        <name>S-adenosyl-L-methionine</name>
        <dbReference type="ChEBI" id="CHEBI:59789"/>
    </ligand>
</feature>
<feature type="binding site" evidence="1">
    <location>
        <position position="244"/>
    </location>
    <ligand>
        <name>S-adenosyl-L-methionine</name>
        <dbReference type="ChEBI" id="CHEBI:59789"/>
    </ligand>
</feature>
<feature type="modified residue" description="N-methylaspartate" evidence="2">
    <location>
        <position position="421"/>
    </location>
</feature>
<feature type="modified residue" description="N-methylaspartate" evidence="2">
    <location>
        <position position="434"/>
    </location>
</feature>
<feature type="modified residue" description="N-methylaspartate" evidence="2">
    <location>
        <position position="447"/>
    </location>
</feature>
<feature type="modified residue" description="N-methylaspartate" evidence="2">
    <location>
        <position position="460"/>
    </location>
</feature>
<feature type="modified residue" description="N-methylaspartate" evidence="2">
    <location>
        <position position="473"/>
    </location>
</feature>
<feature type="modified residue" description="N-methylaspartate" evidence="2">
    <location>
        <position position="486"/>
    </location>
</feature>
<feature type="modified residue" description="N-methylaspartate" evidence="2">
    <location>
        <position position="499"/>
    </location>
</feature>
<feature type="modified residue" description="N-methylaspartate" evidence="2">
    <location>
        <position position="512"/>
    </location>
</feature>
<feature type="modified residue" description="N-methylaspartate" evidence="2">
    <location>
        <position position="525"/>
    </location>
</feature>
<feature type="modified residue" description="N-methylaspartate" evidence="2">
    <location>
        <position position="538"/>
    </location>
</feature>
<organism>
    <name type="scientific">Phlebiopsis gigantea (strain 11061_1 CR5-6)</name>
    <name type="common">White-rot fungus</name>
    <name type="synonym">Peniophora gigantea</name>
    <dbReference type="NCBI Taxonomy" id="745531"/>
    <lineage>
        <taxon>Eukaryota</taxon>
        <taxon>Fungi</taxon>
        <taxon>Dikarya</taxon>
        <taxon>Basidiomycota</taxon>
        <taxon>Agaricomycotina</taxon>
        <taxon>Agaricomycetes</taxon>
        <taxon>Polyporales</taxon>
        <taxon>Phanerochaetaceae</taxon>
        <taxon>Phlebiopsis</taxon>
    </lineage>
</organism>
<sequence>MSSASSDSNTGSLTIAGSGIASVRHMTLETLAHVQEADIVFYVVADPVTEAYIKKNARGPCKDLEVLFDKDKVRYDTYVQMAETMLNAVREGQKVLGIFYGHPGVFVSPSRRALSIARKEGYQAKMLPGISSEDYMFADLEFDPAVHGCCAYEATQLLLREVSLDTAMSNIIWQVGGVGVSKIDFENSKVKLLVDRLEKDFGPDHHVVHYIGAVLPQSATVQDVLKISDLRKEEIVAQFNSCSTLYVPPLTHANKFSGNMVKQLFGQDVTEVSSALCPTPKWAAGSHLGDVVEYGPREKAAVDALVEHTVPADYRVLGGSLAFQQFMIDLALRPAIQANYKENPRALVDATKGLTTVEQAALLLRQPGAVFGVMKLRASEVANEQGHPVAPASLDHVAFTAPSPASLDHVAFSAPNPASLDHVAFIAPTPASLDHVAFSAPTPASLDHVSFGTPTSASLDHVAFEAPVPASLDHVAFAAPVPASLDHVAFAAPTPASLDHVAFAAPTPASLDHVAFAVPVPASLDHIAFSVPTPASLDHVAFAVPVPDHVAGIPCM</sequence>
<reference key="1">
    <citation type="journal article" date="2014" name="PLoS Genet.">
        <title>Analysis of the Phlebiopsis gigantea genome, transcriptome and secretome provides insight into its pioneer colonization strategies of wood.</title>
        <authorList>
            <person name="Hori C."/>
            <person name="Ishida T."/>
            <person name="Igarashi K."/>
            <person name="Samejima M."/>
            <person name="Suzuki H."/>
            <person name="Master E."/>
            <person name="Ferreira P."/>
            <person name="Ruiz-Duenas F.J."/>
            <person name="Held B."/>
            <person name="Canessa P."/>
            <person name="Larrondo L.F."/>
            <person name="Schmoll M."/>
            <person name="Druzhinina I.S."/>
            <person name="Kubicek C.P."/>
            <person name="Gaskell J.A."/>
            <person name="Kersten P."/>
            <person name="St John F."/>
            <person name="Glasner J."/>
            <person name="Sabat G."/>
            <person name="Splinter BonDurant S."/>
            <person name="Syed K."/>
            <person name="Yadav J."/>
            <person name="Mgbeahuruike A.C."/>
            <person name="Kovalchuk A."/>
            <person name="Asiegbu F.O."/>
            <person name="Lackner G."/>
            <person name="Hoffmeister D."/>
            <person name="Rencoret J."/>
            <person name="Gutierrez A."/>
            <person name="Sun H."/>
            <person name="Lindquist E."/>
            <person name="Barry K."/>
            <person name="Riley R."/>
            <person name="Grigoriev I.V."/>
            <person name="Henrissat B."/>
            <person name="Kuees U."/>
            <person name="Berka R.M."/>
            <person name="Martinez A.T."/>
            <person name="Covert S.F."/>
            <person name="Blanchette R.A."/>
            <person name="Cullen D."/>
        </authorList>
    </citation>
    <scope>NUCLEOTIDE SEQUENCE [LARGE SCALE GENOMIC DNA]</scope>
    <source>
        <strain>11061_1 CR5-6</strain>
    </source>
</reference>
<reference key="2">
    <citation type="journal article" date="2019" name="J. Am. Chem. Soc.">
        <title>Distinct autocatalytic alpha-N-methylating precursors expand the borosin RiPP family of peptide natural products.</title>
        <authorList>
            <person name="Quijano M.R."/>
            <person name="Zach C."/>
            <person name="Miller F.S."/>
            <person name="Lee A.R."/>
            <person name="Imani A.S."/>
            <person name="Kuenzler M."/>
            <person name="Freeman M.F."/>
        </authorList>
    </citation>
    <scope>FUNCTION</scope>
    <scope>SUBUNIT</scope>
    <scope>CATALYTIC ACTIVITY</scope>
    <scope>DOMAIN</scope>
    <scope>METHYLATION AT ASP-421; ASP-434; ASP-447; ASP-460; ASP-473; ASP-486; ASP-499; ASP-512; ASP-525 AND ASP-538</scope>
</reference>
<evidence type="ECO:0000250" key="1">
    <source>
        <dbReference type="UniProtKB" id="A0A2R2JFI5"/>
    </source>
</evidence>
<evidence type="ECO:0000269" key="2">
    <source>
    </source>
</evidence>
<evidence type="ECO:0000303" key="3">
    <source>
    </source>
</evidence>
<evidence type="ECO:0000305" key="4"/>
<evidence type="ECO:0000305" key="5">
    <source>
    </source>
</evidence>
<dbReference type="EC" id="2.1.1.-" evidence="2"/>
<dbReference type="EMBL" id="KN840669">
    <property type="protein sequence ID" value="KIP02521.1"/>
    <property type="status" value="ALT_SEQ"/>
    <property type="molecule type" value="Genomic_DNA"/>
</dbReference>
<dbReference type="SMR" id="A0A0C3RR82"/>
<dbReference type="STRING" id="745531.A0A0C3RR82"/>
<dbReference type="HOGENOM" id="CLU_056933_0_0_1"/>
<dbReference type="OrthoDB" id="3149161at2759"/>
<dbReference type="Proteomes" id="UP000053257">
    <property type="component" value="Unassembled WGS sequence"/>
</dbReference>
<dbReference type="GO" id="GO:0008168">
    <property type="term" value="F:methyltransferase activity"/>
    <property type="evidence" value="ECO:0007669"/>
    <property type="project" value="UniProtKB-KW"/>
</dbReference>
<dbReference type="GO" id="GO:0032259">
    <property type="term" value="P:methylation"/>
    <property type="evidence" value="ECO:0007669"/>
    <property type="project" value="UniProtKB-KW"/>
</dbReference>
<dbReference type="CDD" id="cd19916">
    <property type="entry name" value="OphMA_like"/>
    <property type="match status" value="1"/>
</dbReference>
<dbReference type="Gene3D" id="3.40.1010.10">
    <property type="entry name" value="Cobalt-precorrin-4 Transmethylase, Domain 1"/>
    <property type="match status" value="1"/>
</dbReference>
<dbReference type="InterPro" id="IPR000878">
    <property type="entry name" value="4pyrrol_Mease"/>
</dbReference>
<dbReference type="InterPro" id="IPR035996">
    <property type="entry name" value="4pyrrol_Methylase_sf"/>
</dbReference>
<dbReference type="InterPro" id="IPR014777">
    <property type="entry name" value="4pyrrole_Mease_sub1"/>
</dbReference>
<dbReference type="Pfam" id="PF00590">
    <property type="entry name" value="TP_methylase"/>
    <property type="match status" value="1"/>
</dbReference>
<dbReference type="SUPFAM" id="SSF53790">
    <property type="entry name" value="Tetrapyrrole methylase"/>
    <property type="match status" value="1"/>
</dbReference>
<proteinExistence type="evidence at protein level"/>
<comment type="function">
    <text evidence="1 2">Fusion protein of the methyltransferase pgiM1 and 12 type II borosin core peptides; part of the gene cluster that mediates the biosynthesis of a type II borosin, a highly methylated cyclic peptide with potent biological activities (PubMed:31117659). Type II borosins derive from the C-terminus of the fusion protein, and it is the same protein that methylates its own C-terminus using S-adenosyl methionine (SAM) (PubMed:31117659). The C-terminus is subsequently cleaved off and macrocyclized by a prolyloligopeptidase to give the final product (By similarity).</text>
</comment>
<comment type="pathway">
    <text evidence="5">Secondary metabolite biosynthesis.</text>
</comment>
<comment type="subunit">
    <text evidence="2">Homodimer.</text>
</comment>
<comment type="domain">
    <text evidence="5">Within the homodimer, the clasp domain wraps around the adjacent subunit to position the core peptide into the other subunit's active site for iterative intermolecular methylation.</text>
</comment>
<comment type="PTM">
    <text evidence="2 4">PgiMA1 automethylates at Asp-421, Asp-434, Asp-447, Asp-460, Asp-473, Asp-486, Asp-499, Asp-512, Asp-525 and Asp-538 before being processed, probably by the M64 family peptidase found in the genes surrounding PgiMA1, to release methylated peptides which then undergos macrocyclization with the N-terminus of the modified core peptides (PubMed:31117659). Peptide backbone alpha-N-methylations change the physicochemical properties of amide bonds to provide structural constraints and other favorable characteristics including biological membrane permeability to peptides (Probable).</text>
</comment>
<comment type="similarity">
    <text evidence="4">In the N-terminal section; belongs to the precorrin methyltransferase family.</text>
</comment>
<comment type="sequence caution" evidence="4">
    <conflict type="erroneous gene model prediction">
        <sequence resource="EMBL-CDS" id="KIP02521"/>
    </conflict>
</comment>
<accession>A0A0C3RR82</accession>
<protein>
    <recommendedName>
        <fullName evidence="3">Methyltransferase/ribosomally synthesized type II borosin cyclic peptide precursor pgiMA1</fullName>
    </recommendedName>
    <alternativeName>
        <fullName evidence="3">Type II borosin cyclic peptide biosynthesis cluster protein MA1</fullName>
    </alternativeName>
    <component>
        <recommendedName>
            <fullName evidence="3">N-methyltranferase pgiM1</fullName>
            <ecNumber evidence="2">2.1.1.-</ecNumber>
        </recommendedName>
    </component>
    <component>
        <recommendedName>
            <fullName evidence="3">Ribosomally synthesized type II borosin core peptide pgiA1-I</fullName>
        </recommendedName>
    </component>
    <component>
        <recommendedName>
            <fullName evidence="3">Ribosomally synthesized type II borosin core peptide pgiA1-II</fullName>
        </recommendedName>
    </component>
    <component>
        <recommendedName>
            <fullName evidence="3">Ribosomally synthesized type II borosin core peptide pgiA1-III</fullName>
        </recommendedName>
    </component>
    <component>
        <recommendedName>
            <fullName evidence="3">Ribosomally synthesized type II borosin core peptide pgiA1-IV</fullName>
        </recommendedName>
    </component>
    <component>
        <recommendedName>
            <fullName evidence="3">Ribosomally synthesized type II borosin core peptide pgiA1-V</fullName>
        </recommendedName>
    </component>
    <component>
        <recommendedName>
            <fullName evidence="3">Ribosomally synthesized type II borosin core peptide pgiA1-VI</fullName>
        </recommendedName>
    </component>
    <component>
        <recommendedName>
            <fullName evidence="3">Ribosomally synthesized type II borosin core peptide pgiA1-VII</fullName>
        </recommendedName>
    </component>
    <component>
        <recommendedName>
            <fullName evidence="3">Ribosomally synthesized type II borosin core peptide pgiA1-VIII</fullName>
        </recommendedName>
    </component>
    <component>
        <recommendedName>
            <fullName evidence="3">Ribosomally synthesized type II borosin core peptide pgiA1-IX</fullName>
        </recommendedName>
    </component>
    <component>
        <recommendedName>
            <fullName evidence="3">Ribosomally synthesized type II borosin core peptide pgiA1-X</fullName>
        </recommendedName>
    </component>
    <component>
        <recommendedName>
            <fullName evidence="3">Ribosomally synthesized type II borosin core peptide pgiA1-XI</fullName>
        </recommendedName>
    </component>
    <component>
        <recommendedName>
            <fullName evidence="3">Ribosomally synthesized type II borosin core peptide pgiA1-XII</fullName>
        </recommendedName>
    </component>
</protein>
<name>PGMA1_PHLG1</name>